<reference key="1">
    <citation type="journal article" date="2009" name="Stand. Genomic Sci.">
        <title>Complete genome sequence of Beutenbergia cavernae type strain (HKI 0122).</title>
        <authorList>
            <person name="Land M."/>
            <person name="Pukall R."/>
            <person name="Abt B."/>
            <person name="Goker M."/>
            <person name="Rohde M."/>
            <person name="Glavina Del Rio T."/>
            <person name="Tice H."/>
            <person name="Copeland A."/>
            <person name="Cheng J.F."/>
            <person name="Lucas S."/>
            <person name="Chen F."/>
            <person name="Nolan M."/>
            <person name="Bruce D."/>
            <person name="Goodwin L."/>
            <person name="Pitluck S."/>
            <person name="Ivanova N."/>
            <person name="Mavromatis K."/>
            <person name="Ovchinnikova G."/>
            <person name="Pati A."/>
            <person name="Chen A."/>
            <person name="Palaniappan K."/>
            <person name="Hauser L."/>
            <person name="Chang Y.J."/>
            <person name="Jefferies C.C."/>
            <person name="Saunders E."/>
            <person name="Brettin T."/>
            <person name="Detter J.C."/>
            <person name="Han C."/>
            <person name="Chain P."/>
            <person name="Bristow J."/>
            <person name="Eisen J.A."/>
            <person name="Markowitz V."/>
            <person name="Hugenholtz P."/>
            <person name="Kyrpides N.C."/>
            <person name="Klenk H.P."/>
            <person name="Lapidus A."/>
        </authorList>
    </citation>
    <scope>NUCLEOTIDE SEQUENCE [LARGE SCALE GENOMIC DNA]</scope>
    <source>
        <strain>ATCC BAA-8 / DSM 12333 / CCUG 43141 / JCM 11478 / NBRC 16432 / NCIMB 13614 / HKI 0122</strain>
    </source>
</reference>
<name>NAGB_BEUC1</name>
<keyword id="KW-0119">Carbohydrate metabolism</keyword>
<keyword id="KW-0378">Hydrolase</keyword>
<keyword id="KW-1185">Reference proteome</keyword>
<accession>C5BY94</accession>
<comment type="function">
    <text evidence="1">Catalyzes the reversible isomerization-deamination of glucosamine 6-phosphate (GlcN6P) to form fructose 6-phosphate (Fru6P) and ammonium ion.</text>
</comment>
<comment type="catalytic activity">
    <reaction evidence="1">
        <text>alpha-D-glucosamine 6-phosphate + H2O = beta-D-fructose 6-phosphate + NH4(+)</text>
        <dbReference type="Rhea" id="RHEA:12172"/>
        <dbReference type="ChEBI" id="CHEBI:15377"/>
        <dbReference type="ChEBI" id="CHEBI:28938"/>
        <dbReference type="ChEBI" id="CHEBI:57634"/>
        <dbReference type="ChEBI" id="CHEBI:75989"/>
        <dbReference type="EC" id="3.5.99.6"/>
    </reaction>
</comment>
<comment type="pathway">
    <text evidence="1">Amino-sugar metabolism; N-acetylneuraminate degradation; D-fructose 6-phosphate from N-acetylneuraminate: step 5/5.</text>
</comment>
<comment type="similarity">
    <text evidence="1">Belongs to the glucosamine/galactosamine-6-phosphate isomerase family. NagB subfamily.</text>
</comment>
<proteinExistence type="inferred from homology"/>
<protein>
    <recommendedName>
        <fullName evidence="1">Glucosamine-6-phosphate deaminase</fullName>
        <ecNumber evidence="1">3.5.99.6</ecNumber>
    </recommendedName>
    <alternativeName>
        <fullName evidence="1">GlcN6P deaminase</fullName>
        <shortName evidence="1">GNPDA</shortName>
    </alternativeName>
    <alternativeName>
        <fullName evidence="1">Glucosamine-6-phosphate isomerase</fullName>
    </alternativeName>
</protein>
<feature type="chain" id="PRO_1000214078" description="Glucosamine-6-phosphate deaminase">
    <location>
        <begin position="1"/>
        <end position="261"/>
    </location>
</feature>
<feature type="active site" description="Proton acceptor; for enolization step" evidence="1">
    <location>
        <position position="67"/>
    </location>
</feature>
<feature type="active site" description="For ring-opening step" evidence="1">
    <location>
        <position position="136"/>
    </location>
</feature>
<feature type="active site" description="Proton acceptor; for ring-opening step" evidence="1">
    <location>
        <position position="138"/>
    </location>
</feature>
<feature type="active site" description="For ring-opening step" evidence="1">
    <location>
        <position position="143"/>
    </location>
</feature>
<organism>
    <name type="scientific">Beutenbergia cavernae (strain ATCC BAA-8 / DSM 12333 / CCUG 43141 / JCM 11478 / NBRC 16432 / NCIMB 13614 / HKI 0122)</name>
    <dbReference type="NCBI Taxonomy" id="471853"/>
    <lineage>
        <taxon>Bacteria</taxon>
        <taxon>Bacillati</taxon>
        <taxon>Actinomycetota</taxon>
        <taxon>Actinomycetes</taxon>
        <taxon>Micrococcales</taxon>
        <taxon>Beutenbergiaceae</taxon>
        <taxon>Beutenbergia</taxon>
    </lineage>
</organism>
<dbReference type="EC" id="3.5.99.6" evidence="1"/>
<dbReference type="EMBL" id="CP001618">
    <property type="protein sequence ID" value="ACQ80994.1"/>
    <property type="molecule type" value="Genomic_DNA"/>
</dbReference>
<dbReference type="RefSeq" id="WP_015883234.1">
    <property type="nucleotide sequence ID" value="NC_012669.1"/>
</dbReference>
<dbReference type="SMR" id="C5BY94"/>
<dbReference type="STRING" id="471853.Bcav_2749"/>
<dbReference type="KEGG" id="bcv:Bcav_2749"/>
<dbReference type="eggNOG" id="COG0363">
    <property type="taxonomic scope" value="Bacteria"/>
</dbReference>
<dbReference type="HOGENOM" id="CLU_049611_0_1_11"/>
<dbReference type="OrthoDB" id="9791139at2"/>
<dbReference type="UniPathway" id="UPA00629">
    <property type="reaction ID" value="UER00684"/>
</dbReference>
<dbReference type="Proteomes" id="UP000007962">
    <property type="component" value="Chromosome"/>
</dbReference>
<dbReference type="GO" id="GO:0005737">
    <property type="term" value="C:cytoplasm"/>
    <property type="evidence" value="ECO:0007669"/>
    <property type="project" value="TreeGrafter"/>
</dbReference>
<dbReference type="GO" id="GO:0004342">
    <property type="term" value="F:glucosamine-6-phosphate deaminase activity"/>
    <property type="evidence" value="ECO:0007669"/>
    <property type="project" value="UniProtKB-UniRule"/>
</dbReference>
<dbReference type="GO" id="GO:0042802">
    <property type="term" value="F:identical protein binding"/>
    <property type="evidence" value="ECO:0007669"/>
    <property type="project" value="TreeGrafter"/>
</dbReference>
<dbReference type="GO" id="GO:0005975">
    <property type="term" value="P:carbohydrate metabolic process"/>
    <property type="evidence" value="ECO:0007669"/>
    <property type="project" value="InterPro"/>
</dbReference>
<dbReference type="GO" id="GO:0006043">
    <property type="term" value="P:glucosamine catabolic process"/>
    <property type="evidence" value="ECO:0007669"/>
    <property type="project" value="TreeGrafter"/>
</dbReference>
<dbReference type="GO" id="GO:0006046">
    <property type="term" value="P:N-acetylglucosamine catabolic process"/>
    <property type="evidence" value="ECO:0007669"/>
    <property type="project" value="TreeGrafter"/>
</dbReference>
<dbReference type="GO" id="GO:0019262">
    <property type="term" value="P:N-acetylneuraminate catabolic process"/>
    <property type="evidence" value="ECO:0007669"/>
    <property type="project" value="UniProtKB-UniRule"/>
</dbReference>
<dbReference type="CDD" id="cd01399">
    <property type="entry name" value="GlcN6P_deaminase"/>
    <property type="match status" value="1"/>
</dbReference>
<dbReference type="FunFam" id="3.40.50.1360:FF:000003">
    <property type="entry name" value="Glucosamine-6-phosphate deaminase"/>
    <property type="match status" value="1"/>
</dbReference>
<dbReference type="Gene3D" id="3.40.50.1360">
    <property type="match status" value="1"/>
</dbReference>
<dbReference type="HAMAP" id="MF_01241">
    <property type="entry name" value="GlcN6P_deamin"/>
    <property type="match status" value="1"/>
</dbReference>
<dbReference type="InterPro" id="IPR006148">
    <property type="entry name" value="Glc/Gal-6P_isomerase"/>
</dbReference>
<dbReference type="InterPro" id="IPR004547">
    <property type="entry name" value="Glucosamine6P_isomerase"/>
</dbReference>
<dbReference type="InterPro" id="IPR018321">
    <property type="entry name" value="Glucosamine6P_isomerase_CS"/>
</dbReference>
<dbReference type="InterPro" id="IPR037171">
    <property type="entry name" value="NagB/RpiA_transferase-like"/>
</dbReference>
<dbReference type="NCBIfam" id="TIGR00502">
    <property type="entry name" value="nagB"/>
    <property type="match status" value="1"/>
</dbReference>
<dbReference type="NCBIfam" id="NF001684">
    <property type="entry name" value="PRK00443.1-4"/>
    <property type="match status" value="1"/>
</dbReference>
<dbReference type="PANTHER" id="PTHR11280">
    <property type="entry name" value="GLUCOSAMINE-6-PHOSPHATE ISOMERASE"/>
    <property type="match status" value="1"/>
</dbReference>
<dbReference type="PANTHER" id="PTHR11280:SF5">
    <property type="entry name" value="GLUCOSAMINE-6-PHOSPHATE ISOMERASE"/>
    <property type="match status" value="1"/>
</dbReference>
<dbReference type="Pfam" id="PF01182">
    <property type="entry name" value="Glucosamine_iso"/>
    <property type="match status" value="1"/>
</dbReference>
<dbReference type="SUPFAM" id="SSF100950">
    <property type="entry name" value="NagB/RpiA/CoA transferase-like"/>
    <property type="match status" value="1"/>
</dbReference>
<dbReference type="PROSITE" id="PS01161">
    <property type="entry name" value="GLC_GALNAC_ISOMERASE"/>
    <property type="match status" value="1"/>
</dbReference>
<gene>
    <name evidence="1" type="primary">nagB</name>
    <name type="ordered locus">Bcav_2749</name>
</gene>
<evidence type="ECO:0000255" key="1">
    <source>
        <dbReference type="HAMAP-Rule" id="MF_01241"/>
    </source>
</evidence>
<sequence length="261" mass="27680">MEVVIVPDAADAAALVADTIGALLEREPEPVLGLATGSSPLAVYDELAARYERGEVSFANARAFMLDEYVGLPADHPERYRTVIEREFAGRVDFAPGAVQGPDGTAEDVAAACAAYEQAITASGGVDLQILGIGTDGHIAFNEPGSSLASRTRIKTLTEQTRRDNARFFGGDVDAVPTHCLTQGLATIMAAKHIVLLASGRGKAEAIHHLVEGAVSAMWPATILQHHPHVSVLVDPAAASRLQLADYYRQTYAAKPDWQGL</sequence>